<organism>
    <name type="scientific">Agelena orientalis</name>
    <name type="common">Funnel-web spider</name>
    <dbReference type="NCBI Taxonomy" id="293813"/>
    <lineage>
        <taxon>Eukaryota</taxon>
        <taxon>Metazoa</taxon>
        <taxon>Ecdysozoa</taxon>
        <taxon>Arthropoda</taxon>
        <taxon>Chelicerata</taxon>
        <taxon>Arachnida</taxon>
        <taxon>Araneae</taxon>
        <taxon>Araneomorphae</taxon>
        <taxon>Entelegynae</taxon>
        <taxon>Agelenidae</taxon>
        <taxon>Agelena</taxon>
    </lineage>
</organism>
<comment type="function">
    <text evidence="1">Insect active toxin causing rapid but reversible paralysis in crickets. No activity shown in mammals. Does not show effect on mammalian voltage-gated calcium channels (By similarity).</text>
</comment>
<comment type="subcellular location">
    <subcellularLocation>
        <location evidence="1">Secreted</location>
    </subcellularLocation>
</comment>
<comment type="tissue specificity">
    <text>Expressed by the venom gland.</text>
</comment>
<comment type="domain">
    <text evidence="1">The presence of a 'disulfide through disulfide knot' structurally defines this protein as a knottin.</text>
</comment>
<comment type="similarity">
    <text evidence="3">Belongs to the neurotoxin 01 (U2-agtx) family.</text>
</comment>
<proteinExistence type="evidence at transcript level"/>
<accession>Q5Y4Y1</accession>
<reference key="1">
    <citation type="journal article" date="2005" name="Proteins">
        <title>A novel strategy for the identification of toxinlike structures in spider venom.</title>
        <authorList>
            <person name="Kozlov S.A."/>
            <person name="Malyavka A."/>
            <person name="McCutchen B."/>
            <person name="Lu A."/>
            <person name="Schepers E."/>
            <person name="Herrmann R."/>
            <person name="Grishin E.V."/>
        </authorList>
    </citation>
    <scope>NUCLEOTIDE SEQUENCE [MRNA]</scope>
    <source>
        <tissue>Venom gland</tissue>
    </source>
</reference>
<name>TA2GE_AGEOR</name>
<keyword id="KW-1015">Disulfide bond</keyword>
<keyword id="KW-0960">Knottin</keyword>
<keyword id="KW-0528">Neurotoxin</keyword>
<keyword id="KW-0964">Secreted</keyword>
<keyword id="KW-0732">Signal</keyword>
<keyword id="KW-0800">Toxin</keyword>
<feature type="signal peptide" evidence="2">
    <location>
        <begin position="1"/>
        <end position="20"/>
    </location>
</feature>
<feature type="propeptide" id="PRO_5000093611" evidence="2">
    <location>
        <begin position="21"/>
        <end position="34"/>
    </location>
</feature>
<feature type="chain" id="PRO_5000093612" description="U2-agatoxin-Ao1e">
    <location>
        <begin position="35"/>
        <end position="69"/>
    </location>
</feature>
<feature type="disulfide bond" evidence="1">
    <location>
        <begin position="37"/>
        <end position="53"/>
    </location>
</feature>
<feature type="disulfide bond" evidence="1">
    <location>
        <begin position="44"/>
        <end position="58"/>
    </location>
</feature>
<feature type="disulfide bond" evidence="1">
    <location>
        <begin position="52"/>
        <end position="68"/>
    </location>
</feature>
<dbReference type="EMBL" id="AY681301">
    <property type="protein sequence ID" value="AAU93659.1"/>
    <property type="molecule type" value="mRNA"/>
</dbReference>
<dbReference type="SMR" id="Q5Y4Y1"/>
<dbReference type="ArachnoServer" id="AS000109">
    <property type="toxin name" value="U2-agatoxin-Ao1e"/>
</dbReference>
<dbReference type="GO" id="GO:0005576">
    <property type="term" value="C:extracellular region"/>
    <property type="evidence" value="ECO:0007669"/>
    <property type="project" value="UniProtKB-SubCell"/>
</dbReference>
<dbReference type="GO" id="GO:0090729">
    <property type="term" value="F:toxin activity"/>
    <property type="evidence" value="ECO:0007669"/>
    <property type="project" value="UniProtKB-KW"/>
</dbReference>
<dbReference type="Pfam" id="PF05980">
    <property type="entry name" value="Toxin_7"/>
    <property type="match status" value="1"/>
</dbReference>
<dbReference type="SUPFAM" id="SSF57059">
    <property type="entry name" value="omega toxin-like"/>
    <property type="match status" value="1"/>
</dbReference>
<sequence length="69" mass="7614">MRAIISVLLISAMVFSIIEAVPLEEGLQLFEAERVGCLPRNRFCNALSGPRCCSGLRCKELSIWASKCL</sequence>
<protein>
    <recommendedName>
        <fullName>U2-agatoxin-Ao1e</fullName>
        <shortName>U2-AGTX-Ao1e</shortName>
    </recommendedName>
    <alternativeName>
        <fullName>Agel_04</fullName>
    </alternativeName>
</protein>
<evidence type="ECO:0000250" key="1"/>
<evidence type="ECO:0000255" key="2"/>
<evidence type="ECO:0000305" key="3"/>